<accession>A6LSX9</accession>
<feature type="chain" id="PRO_1000078929" description="Homoserine O-acetyltransferase">
    <location>
        <begin position="1"/>
        <end position="304"/>
    </location>
</feature>
<feature type="active site" description="Acyl-thioester intermediate" evidence="1">
    <location>
        <position position="142"/>
    </location>
</feature>
<feature type="active site" description="Proton acceptor" evidence="1">
    <location>
        <position position="235"/>
    </location>
</feature>
<feature type="active site" evidence="1">
    <location>
        <position position="237"/>
    </location>
</feature>
<feature type="binding site" evidence="1">
    <location>
        <position position="163"/>
    </location>
    <ligand>
        <name>substrate</name>
    </ligand>
</feature>
<feature type="binding site" evidence="1">
    <location>
        <position position="192"/>
    </location>
    <ligand>
        <name>substrate</name>
    </ligand>
</feature>
<feature type="binding site" evidence="1">
    <location>
        <position position="249"/>
    </location>
    <ligand>
        <name>substrate</name>
    </ligand>
</feature>
<feature type="site" description="Important for acyl-CoA specificity" evidence="1">
    <location>
        <position position="111"/>
    </location>
</feature>
<feature type="site" description="Important for substrate specificity" evidence="1">
    <location>
        <position position="192"/>
    </location>
</feature>
<keyword id="KW-0012">Acyltransferase</keyword>
<keyword id="KW-0028">Amino-acid biosynthesis</keyword>
<keyword id="KW-0963">Cytoplasm</keyword>
<keyword id="KW-0486">Methionine biosynthesis</keyword>
<keyword id="KW-0808">Transferase</keyword>
<protein>
    <recommendedName>
        <fullName evidence="1">Homoserine O-acetyltransferase</fullName>
        <shortName evidence="1">HAT</shortName>
        <ecNumber evidence="1">2.3.1.31</ecNumber>
    </recommendedName>
    <alternativeName>
        <fullName evidence="1">Homoserine transacetylase</fullName>
        <shortName evidence="1">HTA</shortName>
    </alternativeName>
</protein>
<dbReference type="EC" id="2.3.1.31" evidence="1"/>
<dbReference type="EMBL" id="CP000721">
    <property type="protein sequence ID" value="ABR33459.1"/>
    <property type="molecule type" value="Genomic_DNA"/>
</dbReference>
<dbReference type="SMR" id="A6LSX9"/>
<dbReference type="KEGG" id="cbe:Cbei_1279"/>
<dbReference type="eggNOG" id="COG1897">
    <property type="taxonomic scope" value="Bacteria"/>
</dbReference>
<dbReference type="HOGENOM" id="CLU_057851_0_1_9"/>
<dbReference type="UniPathway" id="UPA00051">
    <property type="reaction ID" value="UER00074"/>
</dbReference>
<dbReference type="Proteomes" id="UP000000565">
    <property type="component" value="Chromosome"/>
</dbReference>
<dbReference type="GO" id="GO:0005737">
    <property type="term" value="C:cytoplasm"/>
    <property type="evidence" value="ECO:0007669"/>
    <property type="project" value="UniProtKB-SubCell"/>
</dbReference>
<dbReference type="GO" id="GO:0004414">
    <property type="term" value="F:homoserine O-acetyltransferase activity"/>
    <property type="evidence" value="ECO:0007669"/>
    <property type="project" value="UniProtKB-EC"/>
</dbReference>
<dbReference type="GO" id="GO:0008899">
    <property type="term" value="F:homoserine O-succinyltransferase activity"/>
    <property type="evidence" value="ECO:0007669"/>
    <property type="project" value="UniProtKB-UniRule"/>
</dbReference>
<dbReference type="GO" id="GO:0019281">
    <property type="term" value="P:L-methionine biosynthetic process from homoserine via O-succinyl-L-homoserine and cystathionine"/>
    <property type="evidence" value="ECO:0007669"/>
    <property type="project" value="InterPro"/>
</dbReference>
<dbReference type="CDD" id="cd03131">
    <property type="entry name" value="GATase1_HTS"/>
    <property type="match status" value="1"/>
</dbReference>
<dbReference type="FunFam" id="3.40.50.880:FF:000004">
    <property type="entry name" value="Homoserine O-succinyltransferase"/>
    <property type="match status" value="1"/>
</dbReference>
<dbReference type="Gene3D" id="3.40.50.880">
    <property type="match status" value="1"/>
</dbReference>
<dbReference type="HAMAP" id="MF_00295">
    <property type="entry name" value="MetA_acyltransf"/>
    <property type="match status" value="1"/>
</dbReference>
<dbReference type="InterPro" id="IPR029062">
    <property type="entry name" value="Class_I_gatase-like"/>
</dbReference>
<dbReference type="InterPro" id="IPR005697">
    <property type="entry name" value="HST_MetA"/>
</dbReference>
<dbReference type="InterPro" id="IPR033752">
    <property type="entry name" value="MetA_family"/>
</dbReference>
<dbReference type="NCBIfam" id="TIGR01001">
    <property type="entry name" value="metA"/>
    <property type="match status" value="1"/>
</dbReference>
<dbReference type="PANTHER" id="PTHR20919">
    <property type="entry name" value="HOMOSERINE O-SUCCINYLTRANSFERASE"/>
    <property type="match status" value="1"/>
</dbReference>
<dbReference type="PANTHER" id="PTHR20919:SF0">
    <property type="entry name" value="HOMOSERINE O-SUCCINYLTRANSFERASE"/>
    <property type="match status" value="1"/>
</dbReference>
<dbReference type="Pfam" id="PF04204">
    <property type="entry name" value="HTS"/>
    <property type="match status" value="1"/>
</dbReference>
<dbReference type="PIRSF" id="PIRSF000450">
    <property type="entry name" value="H_ser_succinyltr"/>
    <property type="match status" value="1"/>
</dbReference>
<dbReference type="SUPFAM" id="SSF52317">
    <property type="entry name" value="Class I glutamine amidotransferase-like"/>
    <property type="match status" value="1"/>
</dbReference>
<reference key="1">
    <citation type="submission" date="2007-06" db="EMBL/GenBank/DDBJ databases">
        <title>Complete sequence of Clostridium beijerinckii NCIMB 8052.</title>
        <authorList>
            <consortium name="US DOE Joint Genome Institute"/>
            <person name="Copeland A."/>
            <person name="Lucas S."/>
            <person name="Lapidus A."/>
            <person name="Barry K."/>
            <person name="Detter J.C."/>
            <person name="Glavina del Rio T."/>
            <person name="Hammon N."/>
            <person name="Israni S."/>
            <person name="Dalin E."/>
            <person name="Tice H."/>
            <person name="Pitluck S."/>
            <person name="Sims D."/>
            <person name="Brettin T."/>
            <person name="Bruce D."/>
            <person name="Tapia R."/>
            <person name="Brainard J."/>
            <person name="Schmutz J."/>
            <person name="Larimer F."/>
            <person name="Land M."/>
            <person name="Hauser L."/>
            <person name="Kyrpides N."/>
            <person name="Mikhailova N."/>
            <person name="Bennet G."/>
            <person name="Cann I."/>
            <person name="Chen J.-S."/>
            <person name="Contreras A.L."/>
            <person name="Jones D."/>
            <person name="Kashket E."/>
            <person name="Mitchell W."/>
            <person name="Stoddard S."/>
            <person name="Schwarz W."/>
            <person name="Qureshi N."/>
            <person name="Young M."/>
            <person name="Shi Z."/>
            <person name="Ezeji T."/>
            <person name="White B."/>
            <person name="Blaschek H."/>
            <person name="Richardson P."/>
        </authorList>
    </citation>
    <scope>NUCLEOTIDE SEQUENCE [LARGE SCALE GENOMIC DNA]</scope>
    <source>
        <strain>ATCC 51743 / NCIMB 8052</strain>
    </source>
</reference>
<organism>
    <name type="scientific">Clostridium beijerinckii (strain ATCC 51743 / NCIMB 8052)</name>
    <name type="common">Clostridium acetobutylicum</name>
    <dbReference type="NCBI Taxonomy" id="290402"/>
    <lineage>
        <taxon>Bacteria</taxon>
        <taxon>Bacillati</taxon>
        <taxon>Bacillota</taxon>
        <taxon>Clostridia</taxon>
        <taxon>Eubacteriales</taxon>
        <taxon>Clostridiaceae</taxon>
        <taxon>Clostridium</taxon>
    </lineage>
</organism>
<gene>
    <name evidence="1" type="primary">metAA</name>
    <name type="ordered locus">Cbei_1279</name>
</gene>
<sequence length="304" mass="35742">MPIKIPIELPAFQVLSDENIFVMNNERANTQDIRPLKIAILNLMPKKIVTENQLLRYLSNTPLQVEVSLIQTKSYTSHNTPPEHLNKFYSYFDDIKQEKFDGLIITGAPVEQMAFEEVTYWKELTEIMEWSKTHVFSTFYICWGAQAGLYYHYDIPKYDLDEKMFGVFSHWVNDEKADLTRGLDDVFYAPHSRHTEVKREDIEKVSNLEILSESEEAGVFIVATKDRRNVFVTGHMEYDRNTLMDEYIRDKEKGDEIALPKNYFRNDDINQKPLYTWRGPASIVFGNWLNYCVYQNTPFDLNTL</sequence>
<proteinExistence type="inferred from homology"/>
<name>METAA_CLOB8</name>
<comment type="function">
    <text evidence="1">Transfers an acetyl group from acetyl-CoA to L-homoserine, forming acetyl-L-homoserine.</text>
</comment>
<comment type="catalytic activity">
    <reaction evidence="1">
        <text>L-homoserine + acetyl-CoA = O-acetyl-L-homoserine + CoA</text>
        <dbReference type="Rhea" id="RHEA:13701"/>
        <dbReference type="ChEBI" id="CHEBI:57287"/>
        <dbReference type="ChEBI" id="CHEBI:57288"/>
        <dbReference type="ChEBI" id="CHEBI:57476"/>
        <dbReference type="ChEBI" id="CHEBI:57716"/>
        <dbReference type="EC" id="2.3.1.31"/>
    </reaction>
</comment>
<comment type="pathway">
    <text evidence="1">Amino-acid biosynthesis; L-methionine biosynthesis via de novo pathway; O-acetyl-L-homoserine from L-homoserine: step 1/1.</text>
</comment>
<comment type="subcellular location">
    <subcellularLocation>
        <location evidence="1">Cytoplasm</location>
    </subcellularLocation>
</comment>
<comment type="similarity">
    <text evidence="1">Belongs to the MetA family.</text>
</comment>
<evidence type="ECO:0000255" key="1">
    <source>
        <dbReference type="HAMAP-Rule" id="MF_00295"/>
    </source>
</evidence>